<comment type="function">
    <text evidence="1 2">Catalyzes the transfer of the gamma-phosphate of ATP to D-galactose to form alpha-D-galactose-1-phosphate (Gal-1-P). Is very specific for its substrate, since it is not able to use D-glucose, D-fructose, D-mannose, 2-deoxy-D-glucose, and D-glucosamine as substrates.</text>
</comment>
<comment type="catalytic activity">
    <reaction evidence="1 2">
        <text>alpha-D-galactose + ATP = alpha-D-galactose 1-phosphate + ADP + H(+)</text>
        <dbReference type="Rhea" id="RHEA:13553"/>
        <dbReference type="ChEBI" id="CHEBI:15378"/>
        <dbReference type="ChEBI" id="CHEBI:28061"/>
        <dbReference type="ChEBI" id="CHEBI:30616"/>
        <dbReference type="ChEBI" id="CHEBI:58336"/>
        <dbReference type="ChEBI" id="CHEBI:456216"/>
        <dbReference type="EC" id="2.7.1.6"/>
    </reaction>
</comment>
<comment type="biophysicochemical properties">
    <kinetics>
        <KM evidence="2">0.21 mM for D-galactose (at 50 degrees Celsius)</KM>
        <KM evidence="2">0.006 mM for ATP (at 50 degrees Celsius)</KM>
        <KM evidence="2">0.27 mM for D-galactose (at 90 degrees Celsius)</KM>
        <KM evidence="2">0.008 mM for ATP (at 90 degrees Celsius)</KM>
        <Vmax evidence="2">3.66 umol/min/mg enzyme (at 50 degrees Celsius)</Vmax>
        <Vmax evidence="2">43.2 umol/min/mg enzyme (at 90 degrees Celsius)</Vmax>
    </kinetics>
    <phDependence>
        <text evidence="2">Optimum pH is 5.0.</text>
    </phDependence>
    <temperatureDependence>
        <text evidence="2">Optimum temperature is 90 degrees Celsius.</text>
    </temperatureDependence>
</comment>
<comment type="pathway">
    <text evidence="1">Carbohydrate metabolism; galactose metabolism.</text>
</comment>
<comment type="subunit">
    <text evidence="2 3 4">Monomer.</text>
</comment>
<comment type="subcellular location">
    <subcellularLocation>
        <location evidence="1">Cytoplasm</location>
    </subcellularLocation>
</comment>
<comment type="similarity">
    <text evidence="1">Belongs to the GHMP kinase family. GalK subfamily.</text>
</comment>
<sequence length="352" mass="39375">MSKITVKSPGRVNLIGEHTDYTYGYVMPMAIDLYTIITAEKYDKVQLYSEHFNEEKTFTLDNLTKEGSWIDYVKGVLWVLIQEGYKIGGLKGKITGDLPLGAGLSSSASFEVGILEVLNQLYNLNIDPLKKALLAKKAENEFVGVPCGILDQFAVVFGKKDNVIFLDTQTLQYEYIPFPKDVSVLVFYTGVKRELASSEYAERKRIAEESLRILGKESSKEVTEKDLGKLPPLHRKFFSYIVRENARVLEVRDALKEGDIEKVGKILTTAHWDLAENYRVSCEELDFFVKKAMELGAYGARLTGAGFGGSAIALVDKDKAKTIGDAILREYLAKFSWKAKYFVVKPSDGVGV</sequence>
<gene>
    <name evidence="1" type="primary">galK</name>
    <name type="ordered locus">PF0445</name>
</gene>
<name>GAL1_PYRFU</name>
<organism>
    <name type="scientific">Pyrococcus furiosus (strain ATCC 43587 / DSM 3638 / JCM 8422 / Vc1)</name>
    <dbReference type="NCBI Taxonomy" id="186497"/>
    <lineage>
        <taxon>Archaea</taxon>
        <taxon>Methanobacteriati</taxon>
        <taxon>Methanobacteriota</taxon>
        <taxon>Thermococci</taxon>
        <taxon>Thermococcales</taxon>
        <taxon>Thermococcaceae</taxon>
        <taxon>Pyrococcus</taxon>
    </lineage>
</organism>
<proteinExistence type="evidence at protein level"/>
<protein>
    <recommendedName>
        <fullName evidence="1">Galactokinase</fullName>
        <ecNumber evidence="1">2.7.1.6</ecNumber>
    </recommendedName>
    <alternativeName>
        <fullName evidence="1">Galactose kinase</fullName>
    </alternativeName>
</protein>
<reference key="1">
    <citation type="submission" date="1999-10" db="EMBL/GenBank/DDBJ databases">
        <authorList>
            <person name="Verhees C.H."/>
        </authorList>
    </citation>
    <scope>NUCLEOTIDE SEQUENCE [GENOMIC DNA]</scope>
    <source>
        <strain>ATCC 43587 / DSM 3638 / JCM 8422 / Vc1</strain>
    </source>
</reference>
<reference key="2">
    <citation type="journal article" date="1999" name="Genetics">
        <title>Divergence of the hyperthermophilic archaea Pyrococcus furiosus and P. horikoshii inferred from complete genomic sequences.</title>
        <authorList>
            <person name="Maeder D.L."/>
            <person name="Weiss R.B."/>
            <person name="Dunn D.M."/>
            <person name="Cherry J.L."/>
            <person name="Gonzalez J.M."/>
            <person name="DiRuggiero J."/>
            <person name="Robb F.T."/>
        </authorList>
    </citation>
    <scope>NUCLEOTIDE SEQUENCE [LARGE SCALE GENOMIC DNA]</scope>
    <source>
        <strain>ATCC 43587 / DSM 3638 / JCM 8422 / Vc1</strain>
    </source>
</reference>
<reference key="3">
    <citation type="journal article" date="2002" name="Biochem. J.">
        <title>Biochemical adaptations of two sugar kinases from the hyperthermophilic archaeon Pyrococcus furiosus.</title>
        <authorList>
            <person name="Verhees C.H."/>
            <person name="Koot D.G."/>
            <person name="Ettema T.J."/>
            <person name="Dijkema C."/>
            <person name="de Vos W.M."/>
            <person name="van der Oost J."/>
        </authorList>
    </citation>
    <scope>FUNCTION</scope>
    <scope>CATALYTIC ACTIVITY</scope>
    <scope>SUBSTRATE SPECIFICITY</scope>
    <scope>BIOPHYSICOCHEMICAL PROPERTIES</scope>
    <scope>SUBUNIT</scope>
    <source>
        <strain>ATCC 43587 / DSM 3638 / JCM 8422 / Vc1</strain>
    </source>
</reference>
<reference key="4">
    <citation type="journal article" date="2003" name="Acta Crystallogr. D">
        <title>Cloning, purification, crystallization and preliminary crystallographic analysis of galactokinase from Pyrococcus furiosus.</title>
        <authorList>
            <person name="de Geus D."/>
            <person name="Hartley A.P."/>
            <person name="Sedelnikova S.E."/>
            <person name="Glynn S.E."/>
            <person name="Baker P.J."/>
            <person name="Verhees C.H."/>
            <person name="van der Oost J."/>
            <person name="Rice D.W."/>
        </authorList>
    </citation>
    <scope>CRYSTALLIZATION</scope>
    <scope>SUBUNIT</scope>
    <source>
        <strain>ATCC 43587 / DSM 3638 / JCM 8422 / Vc1</strain>
    </source>
</reference>
<reference key="5">
    <citation type="journal article" date="2004" name="J. Mol. Biol.">
        <title>Substrate specificity and mechanism from the structure of Pyrococcus furiosus galactokinase.</title>
        <authorList>
            <person name="Hartley A."/>
            <person name="Glynn S.E."/>
            <person name="Barynin V."/>
            <person name="Baker P.J."/>
            <person name="Sedelnikova S.E."/>
            <person name="Verhees C.H."/>
            <person name="de Geus D."/>
            <person name="van der Oost J."/>
            <person name="Timson D.J."/>
            <person name="Reece R.J."/>
            <person name="Rice D.W."/>
        </authorList>
    </citation>
    <scope>X-RAY CRYSTALLOGRAPHY (2.9 ANGSTROMS) IN COMPLEX WITH MG-ADP AND SUBSTRATE</scope>
    <scope>ACTIVE SITE</scope>
    <scope>REACTION MECHANISM</scope>
    <scope>SUBUNIT</scope>
    <source>
        <strain>ATCC 43587 / DSM 3638 / JCM 8422 / Vc1</strain>
    </source>
</reference>
<evidence type="ECO:0000255" key="1">
    <source>
        <dbReference type="HAMAP-Rule" id="MF_00246"/>
    </source>
</evidence>
<evidence type="ECO:0000269" key="2">
    <source>
    </source>
</evidence>
<evidence type="ECO:0000269" key="3">
    <source>
    </source>
</evidence>
<evidence type="ECO:0000269" key="4">
    <source>
    </source>
</evidence>
<evidence type="ECO:0000305" key="5">
    <source>
    </source>
</evidence>
<evidence type="ECO:0007829" key="6">
    <source>
        <dbReference type="PDB" id="1S4E"/>
    </source>
</evidence>
<feature type="chain" id="PRO_0000184641" description="Galactokinase">
    <location>
        <begin position="1"/>
        <end position="352"/>
    </location>
</feature>
<feature type="active site" description="Proton acceptor" evidence="5">
    <location>
        <position position="151"/>
    </location>
</feature>
<feature type="binding site" evidence="4">
    <location>
        <begin position="17"/>
        <end position="20"/>
    </location>
    <ligand>
        <name>substrate</name>
    </ligand>
</feature>
<feature type="binding site" evidence="5">
    <location>
        <position position="49"/>
    </location>
    <ligand>
        <name>ATP</name>
        <dbReference type="ChEBI" id="CHEBI:30616"/>
    </ligand>
</feature>
<feature type="binding site" evidence="5">
    <location>
        <begin position="101"/>
        <end position="107"/>
    </location>
    <ligand>
        <name>ATP</name>
        <dbReference type="ChEBI" id="CHEBI:30616"/>
    </ligand>
</feature>
<feature type="binding site" evidence="4">
    <location>
        <position position="107"/>
    </location>
    <ligand>
        <name>Mg(2+)</name>
        <dbReference type="ChEBI" id="CHEBI:18420"/>
    </ligand>
</feature>
<feature type="binding site" evidence="4">
    <location>
        <position position="139"/>
    </location>
    <ligand>
        <name>Mg(2+)</name>
        <dbReference type="ChEBI" id="CHEBI:18420"/>
    </ligand>
</feature>
<feature type="binding site" evidence="1 4">
    <location>
        <position position="200"/>
    </location>
    <ligand>
        <name>substrate</name>
    </ligand>
</feature>
<feature type="site" description="Transition state stabilizer" evidence="5">
    <location>
        <position position="11"/>
    </location>
</feature>
<feature type="strand" evidence="6">
    <location>
        <begin position="6"/>
        <end position="15"/>
    </location>
</feature>
<feature type="helix" evidence="6">
    <location>
        <begin position="20"/>
        <end position="22"/>
    </location>
</feature>
<feature type="strand" evidence="6">
    <location>
        <begin position="28"/>
        <end position="37"/>
    </location>
</feature>
<feature type="turn" evidence="6">
    <location>
        <begin position="50"/>
        <end position="53"/>
    </location>
</feature>
<feature type="helix" evidence="6">
    <location>
        <begin position="70"/>
        <end position="82"/>
    </location>
</feature>
<feature type="strand" evidence="6">
    <location>
        <begin position="94"/>
        <end position="98"/>
    </location>
</feature>
<feature type="strand" evidence="6">
    <location>
        <begin position="102"/>
        <end position="104"/>
    </location>
</feature>
<feature type="helix" evidence="6">
    <location>
        <begin position="106"/>
        <end position="121"/>
    </location>
</feature>
<feature type="helix" evidence="6">
    <location>
        <begin position="128"/>
        <end position="141"/>
    </location>
</feature>
<feature type="helix" evidence="6">
    <location>
        <begin position="150"/>
        <end position="157"/>
    </location>
</feature>
<feature type="strand" evidence="6">
    <location>
        <begin position="162"/>
        <end position="167"/>
    </location>
</feature>
<feature type="turn" evidence="6">
    <location>
        <begin position="168"/>
        <end position="171"/>
    </location>
</feature>
<feature type="strand" evidence="6">
    <location>
        <begin position="172"/>
        <end position="177"/>
    </location>
</feature>
<feature type="strand" evidence="6">
    <location>
        <begin position="182"/>
        <end position="192"/>
    </location>
</feature>
<feature type="helix" evidence="6">
    <location>
        <begin position="196"/>
        <end position="214"/>
    </location>
</feature>
<feature type="helix" evidence="6">
    <location>
        <begin position="219"/>
        <end position="221"/>
    </location>
</feature>
<feature type="helix" evidence="6">
    <location>
        <begin position="224"/>
        <end position="228"/>
    </location>
</feature>
<feature type="helix" evidence="6">
    <location>
        <begin position="232"/>
        <end position="256"/>
    </location>
</feature>
<feature type="helix" evidence="6">
    <location>
        <begin position="260"/>
        <end position="276"/>
    </location>
</feature>
<feature type="helix" evidence="6">
    <location>
        <begin position="283"/>
        <end position="294"/>
    </location>
</feature>
<feature type="strand" evidence="6">
    <location>
        <begin position="298"/>
        <end position="302"/>
    </location>
</feature>
<feature type="strand" evidence="6">
    <location>
        <begin position="307"/>
        <end position="316"/>
    </location>
</feature>
<feature type="helix" evidence="6">
    <location>
        <begin position="317"/>
        <end position="319"/>
    </location>
</feature>
<feature type="helix" evidence="6">
    <location>
        <begin position="320"/>
        <end position="334"/>
    </location>
</feature>
<feature type="strand" evidence="6">
    <location>
        <begin position="340"/>
        <end position="344"/>
    </location>
</feature>
<keyword id="KW-0002">3D-structure</keyword>
<keyword id="KW-0067">ATP-binding</keyword>
<keyword id="KW-0119">Carbohydrate metabolism</keyword>
<keyword id="KW-0963">Cytoplasm</keyword>
<keyword id="KW-0299">Galactose metabolism</keyword>
<keyword id="KW-0418">Kinase</keyword>
<keyword id="KW-0460">Magnesium</keyword>
<keyword id="KW-0479">Metal-binding</keyword>
<keyword id="KW-0547">Nucleotide-binding</keyword>
<keyword id="KW-1185">Reference proteome</keyword>
<keyword id="KW-0808">Transferase</keyword>
<accession>Q9HHB6</accession>
<dbReference type="EC" id="2.7.1.6" evidence="1"/>
<dbReference type="EMBL" id="AF195244">
    <property type="protein sequence ID" value="AAG28454.1"/>
    <property type="molecule type" value="Genomic_DNA"/>
</dbReference>
<dbReference type="EMBL" id="AE009950">
    <property type="protein sequence ID" value="AAL80569.1"/>
    <property type="molecule type" value="Genomic_DNA"/>
</dbReference>
<dbReference type="RefSeq" id="WP_011011563.1">
    <property type="nucleotide sequence ID" value="NZ_CP023154.1"/>
</dbReference>
<dbReference type="PDB" id="1S4E">
    <property type="method" value="X-ray"/>
    <property type="resolution" value="2.90 A"/>
    <property type="chains" value="A/B/C/D/E/F/G/H/I=1-352"/>
</dbReference>
<dbReference type="PDBsum" id="1S4E"/>
<dbReference type="SMR" id="Q9HHB6"/>
<dbReference type="STRING" id="186497.PF0445"/>
<dbReference type="PaxDb" id="186497-PF0445"/>
<dbReference type="KEGG" id="pfu:PF0445"/>
<dbReference type="PATRIC" id="fig|186497.12.peg.469"/>
<dbReference type="eggNOG" id="arCOG01029">
    <property type="taxonomic scope" value="Archaea"/>
</dbReference>
<dbReference type="HOGENOM" id="CLU_017814_2_1_2"/>
<dbReference type="OrthoDB" id="116110at2157"/>
<dbReference type="PhylomeDB" id="Q9HHB6"/>
<dbReference type="UniPathway" id="UPA00214"/>
<dbReference type="EvolutionaryTrace" id="Q9HHB6"/>
<dbReference type="Proteomes" id="UP000001013">
    <property type="component" value="Chromosome"/>
</dbReference>
<dbReference type="GO" id="GO:0005829">
    <property type="term" value="C:cytosol"/>
    <property type="evidence" value="ECO:0007669"/>
    <property type="project" value="TreeGrafter"/>
</dbReference>
<dbReference type="GO" id="GO:0005524">
    <property type="term" value="F:ATP binding"/>
    <property type="evidence" value="ECO:0000314"/>
    <property type="project" value="UniProtKB"/>
</dbReference>
<dbReference type="GO" id="GO:0004335">
    <property type="term" value="F:galactokinase activity"/>
    <property type="evidence" value="ECO:0000314"/>
    <property type="project" value="UniProtKB"/>
</dbReference>
<dbReference type="GO" id="GO:0005534">
    <property type="term" value="F:galactose binding"/>
    <property type="evidence" value="ECO:0000314"/>
    <property type="project" value="UniProtKB"/>
</dbReference>
<dbReference type="GO" id="GO:0000287">
    <property type="term" value="F:magnesium ion binding"/>
    <property type="evidence" value="ECO:0000314"/>
    <property type="project" value="UniProtKB"/>
</dbReference>
<dbReference type="GO" id="GO:0006012">
    <property type="term" value="P:galactose metabolic process"/>
    <property type="evidence" value="ECO:0000314"/>
    <property type="project" value="UniProtKB"/>
</dbReference>
<dbReference type="FunFam" id="3.30.230.10:FF:000126">
    <property type="entry name" value="Galactokinase"/>
    <property type="match status" value="1"/>
</dbReference>
<dbReference type="FunFam" id="3.30.70.890:FF:000001">
    <property type="entry name" value="Galactokinase"/>
    <property type="match status" value="1"/>
</dbReference>
<dbReference type="Gene3D" id="3.30.230.10">
    <property type="match status" value="1"/>
</dbReference>
<dbReference type="Gene3D" id="3.30.70.890">
    <property type="entry name" value="GHMP kinase, C-terminal domain"/>
    <property type="match status" value="1"/>
</dbReference>
<dbReference type="HAMAP" id="MF_00246">
    <property type="entry name" value="Galactokinase"/>
    <property type="match status" value="1"/>
</dbReference>
<dbReference type="InterPro" id="IPR000705">
    <property type="entry name" value="Galactokinase"/>
</dbReference>
<dbReference type="InterPro" id="IPR022963">
    <property type="entry name" value="Galactokinase_bac"/>
</dbReference>
<dbReference type="InterPro" id="IPR019741">
    <property type="entry name" value="Galactokinase_CS"/>
</dbReference>
<dbReference type="InterPro" id="IPR019539">
    <property type="entry name" value="GalKase_N"/>
</dbReference>
<dbReference type="InterPro" id="IPR013750">
    <property type="entry name" value="GHMP_kinase_C_dom"/>
</dbReference>
<dbReference type="InterPro" id="IPR036554">
    <property type="entry name" value="GHMP_kinase_C_sf"/>
</dbReference>
<dbReference type="InterPro" id="IPR006204">
    <property type="entry name" value="GHMP_kinase_N_dom"/>
</dbReference>
<dbReference type="InterPro" id="IPR006203">
    <property type="entry name" value="GHMP_knse_ATP-bd_CS"/>
</dbReference>
<dbReference type="InterPro" id="IPR006206">
    <property type="entry name" value="Mevalonate/galactokinase"/>
</dbReference>
<dbReference type="InterPro" id="IPR020568">
    <property type="entry name" value="Ribosomal_Su5_D2-typ_SF"/>
</dbReference>
<dbReference type="InterPro" id="IPR014721">
    <property type="entry name" value="Ribsml_uS5_D2-typ_fold_subgr"/>
</dbReference>
<dbReference type="NCBIfam" id="TIGR00131">
    <property type="entry name" value="gal_kin"/>
    <property type="match status" value="1"/>
</dbReference>
<dbReference type="NCBIfam" id="NF003006">
    <property type="entry name" value="PRK03817.1"/>
    <property type="match status" value="1"/>
</dbReference>
<dbReference type="PANTHER" id="PTHR10457:SF7">
    <property type="entry name" value="GALACTOKINASE-RELATED"/>
    <property type="match status" value="1"/>
</dbReference>
<dbReference type="PANTHER" id="PTHR10457">
    <property type="entry name" value="MEVALONATE KINASE/GALACTOKINASE"/>
    <property type="match status" value="1"/>
</dbReference>
<dbReference type="Pfam" id="PF10509">
    <property type="entry name" value="GalKase_gal_bdg"/>
    <property type="match status" value="1"/>
</dbReference>
<dbReference type="Pfam" id="PF08544">
    <property type="entry name" value="GHMP_kinases_C"/>
    <property type="match status" value="1"/>
</dbReference>
<dbReference type="Pfam" id="PF00288">
    <property type="entry name" value="GHMP_kinases_N"/>
    <property type="match status" value="1"/>
</dbReference>
<dbReference type="PIRSF" id="PIRSF000530">
    <property type="entry name" value="Galactokinase"/>
    <property type="match status" value="1"/>
</dbReference>
<dbReference type="PRINTS" id="PR00473">
    <property type="entry name" value="GALCTOKINASE"/>
</dbReference>
<dbReference type="PRINTS" id="PR00959">
    <property type="entry name" value="MEVGALKINASE"/>
</dbReference>
<dbReference type="SUPFAM" id="SSF55060">
    <property type="entry name" value="GHMP Kinase, C-terminal domain"/>
    <property type="match status" value="1"/>
</dbReference>
<dbReference type="SUPFAM" id="SSF54211">
    <property type="entry name" value="Ribosomal protein S5 domain 2-like"/>
    <property type="match status" value="1"/>
</dbReference>
<dbReference type="PROSITE" id="PS00106">
    <property type="entry name" value="GALACTOKINASE"/>
    <property type="match status" value="1"/>
</dbReference>
<dbReference type="PROSITE" id="PS00627">
    <property type="entry name" value="GHMP_KINASES_ATP"/>
    <property type="match status" value="1"/>
</dbReference>